<comment type="function">
    <text evidence="1">The 2-oxoglutarate dehydrogenase complex catalyzes the overall conversion of 2-oxoglutarate to succinyl-CoA and CO(2). It contains multiple copies of three enzymatic components: 2-oxoglutarate dehydrogenase (E1), dihydrolipoamide succinyltransferase (E2) and lipoamide dehydrogenase (E3) (By similarity).</text>
</comment>
<comment type="catalytic activity">
    <reaction>
        <text>N(6)-[(R)-dihydrolipoyl]-L-lysyl-[protein] + succinyl-CoA = N(6)-[(R)-S(8)-succinyldihydrolipoyl]-L-lysyl-[protein] + CoA</text>
        <dbReference type="Rhea" id="RHEA:15213"/>
        <dbReference type="Rhea" id="RHEA-COMP:10475"/>
        <dbReference type="Rhea" id="RHEA-COMP:20092"/>
        <dbReference type="ChEBI" id="CHEBI:57287"/>
        <dbReference type="ChEBI" id="CHEBI:57292"/>
        <dbReference type="ChEBI" id="CHEBI:83100"/>
        <dbReference type="ChEBI" id="CHEBI:83120"/>
        <dbReference type="EC" id="2.3.1.61"/>
    </reaction>
</comment>
<comment type="cofactor">
    <cofactor>
        <name>(R)-lipoate</name>
        <dbReference type="ChEBI" id="CHEBI:83088"/>
    </cofactor>
    <text>Binds 1 lipoyl cofactor covalently.</text>
</comment>
<comment type="pathway">
    <text>Amino-acid degradation; L-lysine degradation via saccharopine pathway; glutaryl-CoA from L-lysine: step 6/6.</text>
</comment>
<comment type="subcellular location">
    <subcellularLocation>
        <location evidence="1">Mitochondrion</location>
    </subcellularLocation>
</comment>
<comment type="similarity">
    <text evidence="4">Belongs to the 2-oxoacid dehydrogenase family.</text>
</comment>
<evidence type="ECO:0000250" key="1"/>
<evidence type="ECO:0000255" key="2">
    <source>
        <dbReference type="PROSITE-ProRule" id="PRU01066"/>
    </source>
</evidence>
<evidence type="ECO:0000256" key="3">
    <source>
        <dbReference type="SAM" id="MobiDB-lite"/>
    </source>
</evidence>
<evidence type="ECO:0000305" key="4"/>
<name>ODO2_SCHPO</name>
<dbReference type="EC" id="2.3.1.61"/>
<dbReference type="EMBL" id="CU329671">
    <property type="protein sequence ID" value="CAA22888.1"/>
    <property type="molecule type" value="Genomic_DNA"/>
</dbReference>
<dbReference type="PIR" id="T40686">
    <property type="entry name" value="T40686"/>
</dbReference>
<dbReference type="RefSeq" id="NP_596331.1">
    <property type="nucleotide sequence ID" value="NM_001022252.2"/>
</dbReference>
<dbReference type="SMR" id="O94681"/>
<dbReference type="BioGRID" id="277684">
    <property type="interactions" value="2"/>
</dbReference>
<dbReference type="FunCoup" id="O94681">
    <property type="interactions" value="591"/>
</dbReference>
<dbReference type="STRING" id="284812.O94681"/>
<dbReference type="iPTMnet" id="O94681"/>
<dbReference type="PaxDb" id="4896-SPBC776.15c.1"/>
<dbReference type="EnsemblFungi" id="SPBC776.15c.1">
    <property type="protein sequence ID" value="SPBC776.15c.1:pep"/>
    <property type="gene ID" value="SPBC776.15c"/>
</dbReference>
<dbReference type="GeneID" id="2541170"/>
<dbReference type="KEGG" id="spo:2541170"/>
<dbReference type="PomBase" id="SPBC776.15c">
    <property type="gene designation" value="kgd2"/>
</dbReference>
<dbReference type="VEuPathDB" id="FungiDB:SPBC776.15c"/>
<dbReference type="eggNOG" id="KOG0559">
    <property type="taxonomic scope" value="Eukaryota"/>
</dbReference>
<dbReference type="HOGENOM" id="CLU_016733_0_1_1"/>
<dbReference type="InParanoid" id="O94681"/>
<dbReference type="OMA" id="NMPQTAV"/>
<dbReference type="PhylomeDB" id="O94681"/>
<dbReference type="Reactome" id="R-SPO-6783984">
    <property type="pathway name" value="Glycine degradation"/>
</dbReference>
<dbReference type="Reactome" id="R-SPO-9853506">
    <property type="pathway name" value="OGDH complex synthesizes succinyl-CoA from 2-OG"/>
</dbReference>
<dbReference type="Reactome" id="R-SPO-9857492">
    <property type="pathway name" value="Protein lipoylation"/>
</dbReference>
<dbReference type="UniPathway" id="UPA00868">
    <property type="reaction ID" value="UER00840"/>
</dbReference>
<dbReference type="PRO" id="PR:O94681"/>
<dbReference type="Proteomes" id="UP000002485">
    <property type="component" value="Chromosome II"/>
</dbReference>
<dbReference type="GO" id="GO:0042645">
    <property type="term" value="C:mitochondrial nucleoid"/>
    <property type="evidence" value="ECO:0000250"/>
    <property type="project" value="PomBase"/>
</dbReference>
<dbReference type="GO" id="GO:0005739">
    <property type="term" value="C:mitochondrion"/>
    <property type="evidence" value="ECO:0007005"/>
    <property type="project" value="PomBase"/>
</dbReference>
<dbReference type="GO" id="GO:0045252">
    <property type="term" value="C:oxoglutarate dehydrogenase complex"/>
    <property type="evidence" value="ECO:0007669"/>
    <property type="project" value="InterPro"/>
</dbReference>
<dbReference type="GO" id="GO:0004149">
    <property type="term" value="F:dihydrolipoyllysine-residue succinyltransferase activity"/>
    <property type="evidence" value="ECO:0000318"/>
    <property type="project" value="GO_Central"/>
</dbReference>
<dbReference type="GO" id="GO:0033512">
    <property type="term" value="P:L-lysine catabolic process to acetyl-CoA via saccharopine"/>
    <property type="evidence" value="ECO:0007669"/>
    <property type="project" value="UniProtKB-UniPathway"/>
</dbReference>
<dbReference type="GO" id="GO:0006099">
    <property type="term" value="P:tricarboxylic acid cycle"/>
    <property type="evidence" value="ECO:0000269"/>
    <property type="project" value="PomBase"/>
</dbReference>
<dbReference type="CDD" id="cd06849">
    <property type="entry name" value="lipoyl_domain"/>
    <property type="match status" value="1"/>
</dbReference>
<dbReference type="FunFam" id="2.40.50.100:FF:000114">
    <property type="entry name" value="Dihydrolipoamide acetyltransferase component of pyruvate dehydrogenase complex"/>
    <property type="match status" value="1"/>
</dbReference>
<dbReference type="FunFam" id="3.30.559.10:FF:000007">
    <property type="entry name" value="Dihydrolipoamide acetyltransferase component of pyruvate dehydrogenase complex"/>
    <property type="match status" value="1"/>
</dbReference>
<dbReference type="Gene3D" id="2.40.50.100">
    <property type="match status" value="1"/>
</dbReference>
<dbReference type="Gene3D" id="3.30.559.10">
    <property type="entry name" value="Chloramphenicol acetyltransferase-like domain"/>
    <property type="match status" value="1"/>
</dbReference>
<dbReference type="InterPro" id="IPR003016">
    <property type="entry name" value="2-oxoA_DH_lipoyl-BS"/>
</dbReference>
<dbReference type="InterPro" id="IPR050537">
    <property type="entry name" value="2-oxoacid_dehydrogenase"/>
</dbReference>
<dbReference type="InterPro" id="IPR001078">
    <property type="entry name" value="2-oxoacid_DH_actylTfrase"/>
</dbReference>
<dbReference type="InterPro" id="IPR000089">
    <property type="entry name" value="Biotin_lipoyl"/>
</dbReference>
<dbReference type="InterPro" id="IPR023213">
    <property type="entry name" value="CAT-like_dom_sf"/>
</dbReference>
<dbReference type="InterPro" id="IPR011053">
    <property type="entry name" value="Single_hybrid_motif"/>
</dbReference>
<dbReference type="InterPro" id="IPR006255">
    <property type="entry name" value="SucB"/>
</dbReference>
<dbReference type="NCBIfam" id="NF004309">
    <property type="entry name" value="PRK05704.1"/>
    <property type="match status" value="1"/>
</dbReference>
<dbReference type="NCBIfam" id="TIGR01347">
    <property type="entry name" value="sucB"/>
    <property type="match status" value="1"/>
</dbReference>
<dbReference type="PANTHER" id="PTHR43416:SF5">
    <property type="entry name" value="DIHYDROLIPOYLLYSINE-RESIDUE SUCCINYLTRANSFERASE COMPONENT OF 2-OXOGLUTARATE DEHYDROGENASE COMPLEX, MITOCHONDRIAL"/>
    <property type="match status" value="1"/>
</dbReference>
<dbReference type="PANTHER" id="PTHR43416">
    <property type="entry name" value="DIHYDROLIPOYLLYSINE-RESIDUE SUCCINYLTRANSFERASE COMPONENT OF 2-OXOGLUTARATE DEHYDROGENASE COMPLEX, MITOCHONDRIAL-RELATED"/>
    <property type="match status" value="1"/>
</dbReference>
<dbReference type="Pfam" id="PF00198">
    <property type="entry name" value="2-oxoacid_dh"/>
    <property type="match status" value="1"/>
</dbReference>
<dbReference type="Pfam" id="PF00364">
    <property type="entry name" value="Biotin_lipoyl"/>
    <property type="match status" value="1"/>
</dbReference>
<dbReference type="SUPFAM" id="SSF52777">
    <property type="entry name" value="CoA-dependent acyltransferases"/>
    <property type="match status" value="1"/>
</dbReference>
<dbReference type="SUPFAM" id="SSF51230">
    <property type="entry name" value="Single hybrid motif"/>
    <property type="match status" value="1"/>
</dbReference>
<dbReference type="PROSITE" id="PS50968">
    <property type="entry name" value="BIOTINYL_LIPOYL"/>
    <property type="match status" value="1"/>
</dbReference>
<dbReference type="PROSITE" id="PS00189">
    <property type="entry name" value="LIPOYL"/>
    <property type="match status" value="1"/>
</dbReference>
<keyword id="KW-0012">Acyltransferase</keyword>
<keyword id="KW-0450">Lipoyl</keyword>
<keyword id="KW-0496">Mitochondrion</keyword>
<keyword id="KW-1185">Reference proteome</keyword>
<keyword id="KW-0808">Transferase</keyword>
<keyword id="KW-0809">Transit peptide</keyword>
<keyword id="KW-0816">Tricarboxylic acid cycle</keyword>
<feature type="transit peptide" description="Mitochondrion">
    <location>
        <begin position="1"/>
        <end status="unknown"/>
    </location>
</feature>
<feature type="chain" id="PRO_0000020477" description="Probable dihydrolipoyllysine-residue succinyltransferase component of 2-oxoglutarate dehydrogenase complex, mitochondrial">
    <location>
        <begin status="unknown"/>
        <end position="452"/>
    </location>
</feature>
<feature type="domain" description="Lipoyl-binding" evidence="2">
    <location>
        <begin position="42"/>
        <end position="117"/>
    </location>
</feature>
<feature type="region of interest" description="Disordered" evidence="3">
    <location>
        <begin position="119"/>
        <end position="225"/>
    </location>
</feature>
<feature type="compositionally biased region" description="Basic and acidic residues" evidence="3">
    <location>
        <begin position="130"/>
        <end position="144"/>
    </location>
</feature>
<feature type="compositionally biased region" description="Basic and acidic residues" evidence="3">
    <location>
        <begin position="154"/>
        <end position="170"/>
    </location>
</feature>
<feature type="compositionally biased region" description="Basic and acidic residues" evidence="3">
    <location>
        <begin position="195"/>
        <end position="209"/>
    </location>
</feature>
<feature type="active site" evidence="1">
    <location>
        <position position="424"/>
    </location>
</feature>
<feature type="active site" evidence="1">
    <location>
        <position position="428"/>
    </location>
</feature>
<feature type="modified residue" description="N6-lipoyllysine" evidence="2">
    <location>
        <position position="83"/>
    </location>
</feature>
<proteinExistence type="inferred from homology"/>
<reference key="1">
    <citation type="journal article" date="2002" name="Nature">
        <title>The genome sequence of Schizosaccharomyces pombe.</title>
        <authorList>
            <person name="Wood V."/>
            <person name="Gwilliam R."/>
            <person name="Rajandream M.A."/>
            <person name="Lyne M.H."/>
            <person name="Lyne R."/>
            <person name="Stewart A."/>
            <person name="Sgouros J.G."/>
            <person name="Peat N."/>
            <person name="Hayles J."/>
            <person name="Baker S.G."/>
            <person name="Basham D."/>
            <person name="Bowman S."/>
            <person name="Brooks K."/>
            <person name="Brown D."/>
            <person name="Brown S."/>
            <person name="Chillingworth T."/>
            <person name="Churcher C.M."/>
            <person name="Collins M."/>
            <person name="Connor R."/>
            <person name="Cronin A."/>
            <person name="Davis P."/>
            <person name="Feltwell T."/>
            <person name="Fraser A."/>
            <person name="Gentles S."/>
            <person name="Goble A."/>
            <person name="Hamlin N."/>
            <person name="Harris D.E."/>
            <person name="Hidalgo J."/>
            <person name="Hodgson G."/>
            <person name="Holroyd S."/>
            <person name="Hornsby T."/>
            <person name="Howarth S."/>
            <person name="Huckle E.J."/>
            <person name="Hunt S."/>
            <person name="Jagels K."/>
            <person name="James K.D."/>
            <person name="Jones L."/>
            <person name="Jones M."/>
            <person name="Leather S."/>
            <person name="McDonald S."/>
            <person name="McLean J."/>
            <person name="Mooney P."/>
            <person name="Moule S."/>
            <person name="Mungall K.L."/>
            <person name="Murphy L.D."/>
            <person name="Niblett D."/>
            <person name="Odell C."/>
            <person name="Oliver K."/>
            <person name="O'Neil S."/>
            <person name="Pearson D."/>
            <person name="Quail M.A."/>
            <person name="Rabbinowitsch E."/>
            <person name="Rutherford K.M."/>
            <person name="Rutter S."/>
            <person name="Saunders D."/>
            <person name="Seeger K."/>
            <person name="Sharp S."/>
            <person name="Skelton J."/>
            <person name="Simmonds M.N."/>
            <person name="Squares R."/>
            <person name="Squares S."/>
            <person name="Stevens K."/>
            <person name="Taylor K."/>
            <person name="Taylor R.G."/>
            <person name="Tivey A."/>
            <person name="Walsh S.V."/>
            <person name="Warren T."/>
            <person name="Whitehead S."/>
            <person name="Woodward J.R."/>
            <person name="Volckaert G."/>
            <person name="Aert R."/>
            <person name="Robben J."/>
            <person name="Grymonprez B."/>
            <person name="Weltjens I."/>
            <person name="Vanstreels E."/>
            <person name="Rieger M."/>
            <person name="Schaefer M."/>
            <person name="Mueller-Auer S."/>
            <person name="Gabel C."/>
            <person name="Fuchs M."/>
            <person name="Duesterhoeft A."/>
            <person name="Fritzc C."/>
            <person name="Holzer E."/>
            <person name="Moestl D."/>
            <person name="Hilbert H."/>
            <person name="Borzym K."/>
            <person name="Langer I."/>
            <person name="Beck A."/>
            <person name="Lehrach H."/>
            <person name="Reinhardt R."/>
            <person name="Pohl T.M."/>
            <person name="Eger P."/>
            <person name="Zimmermann W."/>
            <person name="Wedler H."/>
            <person name="Wambutt R."/>
            <person name="Purnelle B."/>
            <person name="Goffeau A."/>
            <person name="Cadieu E."/>
            <person name="Dreano S."/>
            <person name="Gloux S."/>
            <person name="Lelaure V."/>
            <person name="Mottier S."/>
            <person name="Galibert F."/>
            <person name="Aves S.J."/>
            <person name="Xiang Z."/>
            <person name="Hunt C."/>
            <person name="Moore K."/>
            <person name="Hurst S.M."/>
            <person name="Lucas M."/>
            <person name="Rochet M."/>
            <person name="Gaillardin C."/>
            <person name="Tallada V.A."/>
            <person name="Garzon A."/>
            <person name="Thode G."/>
            <person name="Daga R.R."/>
            <person name="Cruzado L."/>
            <person name="Jimenez J."/>
            <person name="Sanchez M."/>
            <person name="del Rey F."/>
            <person name="Benito J."/>
            <person name="Dominguez A."/>
            <person name="Revuelta J.L."/>
            <person name="Moreno S."/>
            <person name="Armstrong J."/>
            <person name="Forsburg S.L."/>
            <person name="Cerutti L."/>
            <person name="Lowe T."/>
            <person name="McCombie W.R."/>
            <person name="Paulsen I."/>
            <person name="Potashkin J."/>
            <person name="Shpakovski G.V."/>
            <person name="Ussery D."/>
            <person name="Barrell B.G."/>
            <person name="Nurse P."/>
        </authorList>
    </citation>
    <scope>NUCLEOTIDE SEQUENCE [LARGE SCALE GENOMIC DNA]</scope>
    <source>
        <strain>972 / ATCC 24843</strain>
    </source>
</reference>
<accession>O94681</accession>
<protein>
    <recommendedName>
        <fullName>Probable dihydrolipoyllysine-residue succinyltransferase component of 2-oxoglutarate dehydrogenase complex, mitochondrial</fullName>
        <ecNumber>2.3.1.61</ecNumber>
    </recommendedName>
    <alternativeName>
        <fullName>2-oxoglutarate dehydrogenase complex component E2</fullName>
        <shortName>OGDC-E2</shortName>
    </alternativeName>
    <alternativeName>
        <fullName>Probable dihydrolipoamide succinyltransferase component of 2-oxoglutarate dehydrogenase complex</fullName>
    </alternativeName>
</protein>
<gene>
    <name type="primary">kgd2</name>
    <name type="ORF">SPBC776.15c</name>
</gene>
<sequence>MTSYGNGFRMMAKCLLSLRSGYSVTAPVSKSMANVLWARYASTRIKTPPFPESITEGTLAQWLKQPGEYVNKDEEIASVETDKIDAPVTAPDAGVLKEQLVKEGDTITIDQDIAVIDTSAAPPEGGSAGPKKDEVKTADADAAKDLSTPQDSSKPIEEKPMPDLGAEQKESAPSSTKPAPDAKEPEFSSPKPKPAKSEPVKQSKPKATETARPSSFSRNEDRVKMNRMRLRIAERLKESQNRAASLTTFNECDMSAVVALRKKYKDEILKETGVKIGFMSFFSKACTQAMKQIPAINGSIEGEGKGDTLVYRDFCDLSIAVATPKGLVTPVIRNAESMSLLEIESAIATLGSKARAGKLAIEDMASGTFTISNGGIFGSLYGTPIINLPQTAVLGLHAIKERPVVINGQVVPRPMMYLALTYDHRMVDGREAVTFLRLVKEYIEDPAKMLLV</sequence>
<organism>
    <name type="scientific">Schizosaccharomyces pombe (strain 972 / ATCC 24843)</name>
    <name type="common">Fission yeast</name>
    <dbReference type="NCBI Taxonomy" id="284812"/>
    <lineage>
        <taxon>Eukaryota</taxon>
        <taxon>Fungi</taxon>
        <taxon>Dikarya</taxon>
        <taxon>Ascomycota</taxon>
        <taxon>Taphrinomycotina</taxon>
        <taxon>Schizosaccharomycetes</taxon>
        <taxon>Schizosaccharomycetales</taxon>
        <taxon>Schizosaccharomycetaceae</taxon>
        <taxon>Schizosaccharomyces</taxon>
    </lineage>
</organism>